<organism>
    <name type="scientific">Bordetella avium (strain 197N)</name>
    <dbReference type="NCBI Taxonomy" id="360910"/>
    <lineage>
        <taxon>Bacteria</taxon>
        <taxon>Pseudomonadati</taxon>
        <taxon>Pseudomonadota</taxon>
        <taxon>Betaproteobacteria</taxon>
        <taxon>Burkholderiales</taxon>
        <taxon>Alcaligenaceae</taxon>
        <taxon>Bordetella</taxon>
    </lineage>
</organism>
<feature type="chain" id="PRO_0000234952" description="Serine hydroxymethyltransferase">
    <location>
        <begin position="1"/>
        <end position="416"/>
    </location>
</feature>
<feature type="binding site" evidence="1">
    <location>
        <position position="121"/>
    </location>
    <ligand>
        <name>(6S)-5,6,7,8-tetrahydrofolate</name>
        <dbReference type="ChEBI" id="CHEBI:57453"/>
    </ligand>
</feature>
<feature type="binding site" evidence="1">
    <location>
        <begin position="125"/>
        <end position="127"/>
    </location>
    <ligand>
        <name>(6S)-5,6,7,8-tetrahydrofolate</name>
        <dbReference type="ChEBI" id="CHEBI:57453"/>
    </ligand>
</feature>
<feature type="site" description="Plays an important role in substrate specificity" evidence="1">
    <location>
        <position position="228"/>
    </location>
</feature>
<feature type="modified residue" description="N6-(pyridoxal phosphate)lysine" evidence="1">
    <location>
        <position position="229"/>
    </location>
</feature>
<dbReference type="EC" id="2.1.2.1" evidence="1"/>
<dbReference type="EMBL" id="AM167904">
    <property type="protein sequence ID" value="CAJ50571.1"/>
    <property type="molecule type" value="Genomic_DNA"/>
</dbReference>
<dbReference type="RefSeq" id="WP_012418600.1">
    <property type="nucleotide sequence ID" value="NC_010645.1"/>
</dbReference>
<dbReference type="SMR" id="Q2KV15"/>
<dbReference type="STRING" id="360910.BAV2961"/>
<dbReference type="GeneID" id="92933781"/>
<dbReference type="KEGG" id="bav:BAV2961"/>
<dbReference type="eggNOG" id="COG0112">
    <property type="taxonomic scope" value="Bacteria"/>
</dbReference>
<dbReference type="HOGENOM" id="CLU_022477_2_1_4"/>
<dbReference type="OrthoDB" id="9803846at2"/>
<dbReference type="UniPathway" id="UPA00193"/>
<dbReference type="UniPathway" id="UPA00288">
    <property type="reaction ID" value="UER01023"/>
</dbReference>
<dbReference type="Proteomes" id="UP000001977">
    <property type="component" value="Chromosome"/>
</dbReference>
<dbReference type="GO" id="GO:0005829">
    <property type="term" value="C:cytosol"/>
    <property type="evidence" value="ECO:0007669"/>
    <property type="project" value="TreeGrafter"/>
</dbReference>
<dbReference type="GO" id="GO:0004372">
    <property type="term" value="F:glycine hydroxymethyltransferase activity"/>
    <property type="evidence" value="ECO:0007669"/>
    <property type="project" value="UniProtKB-UniRule"/>
</dbReference>
<dbReference type="GO" id="GO:0030170">
    <property type="term" value="F:pyridoxal phosphate binding"/>
    <property type="evidence" value="ECO:0007669"/>
    <property type="project" value="UniProtKB-UniRule"/>
</dbReference>
<dbReference type="GO" id="GO:0019264">
    <property type="term" value="P:glycine biosynthetic process from serine"/>
    <property type="evidence" value="ECO:0007669"/>
    <property type="project" value="UniProtKB-UniRule"/>
</dbReference>
<dbReference type="GO" id="GO:0035999">
    <property type="term" value="P:tetrahydrofolate interconversion"/>
    <property type="evidence" value="ECO:0007669"/>
    <property type="project" value="UniProtKB-UniRule"/>
</dbReference>
<dbReference type="CDD" id="cd00378">
    <property type="entry name" value="SHMT"/>
    <property type="match status" value="1"/>
</dbReference>
<dbReference type="FunFam" id="3.40.640.10:FF:000001">
    <property type="entry name" value="Serine hydroxymethyltransferase"/>
    <property type="match status" value="1"/>
</dbReference>
<dbReference type="FunFam" id="3.90.1150.10:FF:000003">
    <property type="entry name" value="Serine hydroxymethyltransferase"/>
    <property type="match status" value="1"/>
</dbReference>
<dbReference type="Gene3D" id="3.90.1150.10">
    <property type="entry name" value="Aspartate Aminotransferase, domain 1"/>
    <property type="match status" value="1"/>
</dbReference>
<dbReference type="Gene3D" id="3.40.640.10">
    <property type="entry name" value="Type I PLP-dependent aspartate aminotransferase-like (Major domain)"/>
    <property type="match status" value="1"/>
</dbReference>
<dbReference type="HAMAP" id="MF_00051">
    <property type="entry name" value="SHMT"/>
    <property type="match status" value="1"/>
</dbReference>
<dbReference type="InterPro" id="IPR015424">
    <property type="entry name" value="PyrdxlP-dep_Trfase"/>
</dbReference>
<dbReference type="InterPro" id="IPR015421">
    <property type="entry name" value="PyrdxlP-dep_Trfase_major"/>
</dbReference>
<dbReference type="InterPro" id="IPR015422">
    <property type="entry name" value="PyrdxlP-dep_Trfase_small"/>
</dbReference>
<dbReference type="InterPro" id="IPR001085">
    <property type="entry name" value="Ser_HO-MeTrfase"/>
</dbReference>
<dbReference type="InterPro" id="IPR049943">
    <property type="entry name" value="Ser_HO-MeTrfase-like"/>
</dbReference>
<dbReference type="InterPro" id="IPR019798">
    <property type="entry name" value="Ser_HO-MeTrfase_PLP_BS"/>
</dbReference>
<dbReference type="InterPro" id="IPR039429">
    <property type="entry name" value="SHMT-like_dom"/>
</dbReference>
<dbReference type="NCBIfam" id="NF000586">
    <property type="entry name" value="PRK00011.1"/>
    <property type="match status" value="1"/>
</dbReference>
<dbReference type="PANTHER" id="PTHR11680">
    <property type="entry name" value="SERINE HYDROXYMETHYLTRANSFERASE"/>
    <property type="match status" value="1"/>
</dbReference>
<dbReference type="PANTHER" id="PTHR11680:SF50">
    <property type="entry name" value="SERINE HYDROXYMETHYLTRANSFERASE"/>
    <property type="match status" value="1"/>
</dbReference>
<dbReference type="Pfam" id="PF00464">
    <property type="entry name" value="SHMT"/>
    <property type="match status" value="1"/>
</dbReference>
<dbReference type="PIRSF" id="PIRSF000412">
    <property type="entry name" value="SHMT"/>
    <property type="match status" value="1"/>
</dbReference>
<dbReference type="SUPFAM" id="SSF53383">
    <property type="entry name" value="PLP-dependent transferases"/>
    <property type="match status" value="1"/>
</dbReference>
<dbReference type="PROSITE" id="PS00096">
    <property type="entry name" value="SHMT"/>
    <property type="match status" value="1"/>
</dbReference>
<comment type="function">
    <text evidence="1">Catalyzes the reversible interconversion of serine and glycine with tetrahydrofolate (THF) serving as the one-carbon carrier. This reaction serves as the major source of one-carbon groups required for the biosynthesis of purines, thymidylate, methionine, and other important biomolecules. Also exhibits THF-independent aldolase activity toward beta-hydroxyamino acids, producing glycine and aldehydes, via a retro-aldol mechanism.</text>
</comment>
<comment type="catalytic activity">
    <reaction evidence="1">
        <text>(6R)-5,10-methylene-5,6,7,8-tetrahydrofolate + glycine + H2O = (6S)-5,6,7,8-tetrahydrofolate + L-serine</text>
        <dbReference type="Rhea" id="RHEA:15481"/>
        <dbReference type="ChEBI" id="CHEBI:15377"/>
        <dbReference type="ChEBI" id="CHEBI:15636"/>
        <dbReference type="ChEBI" id="CHEBI:33384"/>
        <dbReference type="ChEBI" id="CHEBI:57305"/>
        <dbReference type="ChEBI" id="CHEBI:57453"/>
        <dbReference type="EC" id="2.1.2.1"/>
    </reaction>
</comment>
<comment type="cofactor">
    <cofactor evidence="1">
        <name>pyridoxal 5'-phosphate</name>
        <dbReference type="ChEBI" id="CHEBI:597326"/>
    </cofactor>
</comment>
<comment type="pathway">
    <text evidence="1">One-carbon metabolism; tetrahydrofolate interconversion.</text>
</comment>
<comment type="pathway">
    <text evidence="1">Amino-acid biosynthesis; glycine biosynthesis; glycine from L-serine: step 1/1.</text>
</comment>
<comment type="subunit">
    <text evidence="1">Homodimer.</text>
</comment>
<comment type="subcellular location">
    <subcellularLocation>
        <location evidence="1">Cytoplasm</location>
    </subcellularLocation>
</comment>
<comment type="similarity">
    <text evidence="1">Belongs to the SHMT family.</text>
</comment>
<name>GLYA_BORA1</name>
<sequence>MFDRKLTLDKVDPDLWAAIQKEDERQEQHIELIASENYASPAVMQAQGTQLTNKYAEGYPGKRYYGGCEYVDIVEQLAIDRLKELFGAEAANVQPNSGSQANQGVYMAVLKPGDTVLGMSLAEGGHLTHGASVNASGKLYNFLSYGLDENEVLNYAQVEALAREHKPKLIVAGASAYALHIDFERMARIARENGALFMVDIAHYAGLVAGGQYPNPVPHADFVTSTTHKSLRGPRGGVIMMKAQHEKAVNSAIFPGIQGGPLEHVIAAKAVAFKEALSPEFKDYASQVVKNAKVLAETLVKRGLRIVSGRTESHVMLVDLRAKGITGKEAEAVLGKAHITVNKNAIPNDPEKPFVTSGIRLGTPAMTTRGFKEAEAELTGNLIADVLENPHDEANIAAVRAKVNELTSRLPVYSAK</sequence>
<accession>Q2KV15</accession>
<gene>
    <name evidence="1" type="primary">glyA</name>
    <name type="ordered locus">BAV2961</name>
</gene>
<evidence type="ECO:0000255" key="1">
    <source>
        <dbReference type="HAMAP-Rule" id="MF_00051"/>
    </source>
</evidence>
<protein>
    <recommendedName>
        <fullName evidence="1">Serine hydroxymethyltransferase</fullName>
        <shortName evidence="1">SHMT</shortName>
        <shortName evidence="1">Serine methylase</shortName>
        <ecNumber evidence="1">2.1.2.1</ecNumber>
    </recommendedName>
</protein>
<proteinExistence type="inferred from homology"/>
<reference key="1">
    <citation type="journal article" date="2006" name="J. Bacteriol.">
        <title>Comparison of the genome sequence of the poultry pathogen Bordetella avium with those of B. bronchiseptica, B. pertussis, and B. parapertussis reveals extensive diversity in surface structures associated with host interaction.</title>
        <authorList>
            <person name="Sebaihia M."/>
            <person name="Preston A."/>
            <person name="Maskell D.J."/>
            <person name="Kuzmiak H."/>
            <person name="Connell T.D."/>
            <person name="King N.D."/>
            <person name="Orndorff P.E."/>
            <person name="Miyamoto D.M."/>
            <person name="Thomson N.R."/>
            <person name="Harris D."/>
            <person name="Goble A."/>
            <person name="Lord A."/>
            <person name="Murphy L."/>
            <person name="Quail M.A."/>
            <person name="Rutter S."/>
            <person name="Squares R."/>
            <person name="Squares S."/>
            <person name="Woodward J."/>
            <person name="Parkhill J."/>
            <person name="Temple L.M."/>
        </authorList>
    </citation>
    <scope>NUCLEOTIDE SEQUENCE [LARGE SCALE GENOMIC DNA]</scope>
    <source>
        <strain>197N</strain>
    </source>
</reference>
<keyword id="KW-0028">Amino-acid biosynthesis</keyword>
<keyword id="KW-0963">Cytoplasm</keyword>
<keyword id="KW-0554">One-carbon metabolism</keyword>
<keyword id="KW-0663">Pyridoxal phosphate</keyword>
<keyword id="KW-1185">Reference proteome</keyword>
<keyword id="KW-0808">Transferase</keyword>